<gene>
    <name evidence="1" type="primary">psd</name>
    <name type="ordered locus">NMA1160</name>
</gene>
<sequence length="265" mass="29041">MNRLYPHPIIAREGWPIIGGGLALSLLVSMCCGWWSLPFWVFTVFALQFFRDPAREIPQNPEAVLSPVDGRIVVVERARDPYRDVDALKISIFMNVFNVHSQKSPADCTVTKVVYNKGKFVNADLDKASTENERNAVLATTASGREITFVQVAGLVARRILCYTQAGAKLSRGERYGFIRFGSRVDMYLPVDAQAQVAIGDKVNGVSTVLARLPLTAPQIESEPESEPALQTAPVETAANPSAEQRQIEAVAAKIQAAVQDVLKD</sequence>
<keyword id="KW-1003">Cell membrane</keyword>
<keyword id="KW-0210">Decarboxylase</keyword>
<keyword id="KW-0444">Lipid biosynthesis</keyword>
<keyword id="KW-0443">Lipid metabolism</keyword>
<keyword id="KW-0456">Lyase</keyword>
<keyword id="KW-0472">Membrane</keyword>
<keyword id="KW-0594">Phospholipid biosynthesis</keyword>
<keyword id="KW-1208">Phospholipid metabolism</keyword>
<keyword id="KW-0670">Pyruvate</keyword>
<keyword id="KW-0865">Zymogen</keyword>
<protein>
    <recommendedName>
        <fullName evidence="1">Phosphatidylserine decarboxylase proenzyme</fullName>
        <ecNumber evidence="1">4.1.1.65</ecNumber>
    </recommendedName>
    <component>
        <recommendedName>
            <fullName evidence="1">Phosphatidylserine decarboxylase alpha chain</fullName>
        </recommendedName>
    </component>
    <component>
        <recommendedName>
            <fullName evidence="1">Phosphatidylserine decarboxylase beta chain</fullName>
        </recommendedName>
    </component>
</protein>
<reference key="1">
    <citation type="journal article" date="2000" name="Nature">
        <title>Complete DNA sequence of a serogroup A strain of Neisseria meningitidis Z2491.</title>
        <authorList>
            <person name="Parkhill J."/>
            <person name="Achtman M."/>
            <person name="James K.D."/>
            <person name="Bentley S.D."/>
            <person name="Churcher C.M."/>
            <person name="Klee S.R."/>
            <person name="Morelli G."/>
            <person name="Basham D."/>
            <person name="Brown D."/>
            <person name="Chillingworth T."/>
            <person name="Davies R.M."/>
            <person name="Davis P."/>
            <person name="Devlin K."/>
            <person name="Feltwell T."/>
            <person name="Hamlin N."/>
            <person name="Holroyd S."/>
            <person name="Jagels K."/>
            <person name="Leather S."/>
            <person name="Moule S."/>
            <person name="Mungall K.L."/>
            <person name="Quail M.A."/>
            <person name="Rajandream M.A."/>
            <person name="Rutherford K.M."/>
            <person name="Simmonds M."/>
            <person name="Skelton J."/>
            <person name="Whitehead S."/>
            <person name="Spratt B.G."/>
            <person name="Barrell B.G."/>
        </authorList>
    </citation>
    <scope>NUCLEOTIDE SEQUENCE [LARGE SCALE GENOMIC DNA]</scope>
    <source>
        <strain>DSM 15465 / Z2491</strain>
    </source>
</reference>
<proteinExistence type="inferred from homology"/>
<evidence type="ECO:0000255" key="1">
    <source>
        <dbReference type="HAMAP-Rule" id="MF_00664"/>
    </source>
</evidence>
<evidence type="ECO:0000256" key="2">
    <source>
        <dbReference type="SAM" id="MobiDB-lite"/>
    </source>
</evidence>
<accession>Q9JUS3</accession>
<accession>A1IRI0</accession>
<comment type="function">
    <text evidence="1">Catalyzes the formation of phosphatidylethanolamine (PtdEtn) from phosphatidylserine (PtdSer).</text>
</comment>
<comment type="catalytic activity">
    <reaction evidence="1">
        <text>a 1,2-diacyl-sn-glycero-3-phospho-L-serine + H(+) = a 1,2-diacyl-sn-glycero-3-phosphoethanolamine + CO2</text>
        <dbReference type="Rhea" id="RHEA:20828"/>
        <dbReference type="ChEBI" id="CHEBI:15378"/>
        <dbReference type="ChEBI" id="CHEBI:16526"/>
        <dbReference type="ChEBI" id="CHEBI:57262"/>
        <dbReference type="ChEBI" id="CHEBI:64612"/>
        <dbReference type="EC" id="4.1.1.65"/>
    </reaction>
</comment>
<comment type="cofactor">
    <cofactor evidence="1">
        <name>pyruvate</name>
        <dbReference type="ChEBI" id="CHEBI:15361"/>
    </cofactor>
    <text evidence="1">Binds 1 pyruvoyl group covalently per subunit.</text>
</comment>
<comment type="pathway">
    <text evidence="1">Phospholipid metabolism; phosphatidylethanolamine biosynthesis; phosphatidylethanolamine from CDP-diacylglycerol: step 2/2.</text>
</comment>
<comment type="subunit">
    <text evidence="1">Heterodimer of a large membrane-associated beta subunit and a small pyruvoyl-containing alpha subunit.</text>
</comment>
<comment type="subcellular location">
    <subcellularLocation>
        <location evidence="1">Cell membrane</location>
        <topology evidence="1">Peripheral membrane protein</topology>
    </subcellularLocation>
</comment>
<comment type="PTM">
    <text evidence="1">Is synthesized initially as an inactive proenzyme. Formation of the active enzyme involves a self-maturation process in which the active site pyruvoyl group is generated from an internal serine residue via an autocatalytic post-translational modification. Two non-identical subunits are generated from the proenzyme in this reaction, and the pyruvate is formed at the N-terminus of the alpha chain, which is derived from the carboxyl end of the proenzyme. The post-translation cleavage follows an unusual pathway, termed non-hydrolytic serinolysis, in which the side chain hydroxyl group of the serine supplies its oxygen atom to form the C-terminus of the beta chain, while the remainder of the serine residue undergoes an oxidative deamination to produce ammonia and the pyruvoyl prosthetic group on the alpha chain.</text>
</comment>
<comment type="similarity">
    <text evidence="1">Belongs to the phosphatidylserine decarboxylase family. PSD-A subfamily.</text>
</comment>
<dbReference type="EC" id="4.1.1.65" evidence="1"/>
<dbReference type="EMBL" id="AL157959">
    <property type="protein sequence ID" value="CAM08366.1"/>
    <property type="molecule type" value="Genomic_DNA"/>
</dbReference>
<dbReference type="PIR" id="C81883">
    <property type="entry name" value="C81883"/>
</dbReference>
<dbReference type="RefSeq" id="WP_002226415.1">
    <property type="nucleotide sequence ID" value="NC_003116.1"/>
</dbReference>
<dbReference type="EnsemblBacteria" id="CAM08366">
    <property type="protein sequence ID" value="CAM08366"/>
    <property type="gene ID" value="NMA1160"/>
</dbReference>
<dbReference type="KEGG" id="nma:NMA1160"/>
<dbReference type="HOGENOM" id="CLU_072492_0_0_4"/>
<dbReference type="UniPathway" id="UPA00558">
    <property type="reaction ID" value="UER00616"/>
</dbReference>
<dbReference type="Proteomes" id="UP000000626">
    <property type="component" value="Chromosome"/>
</dbReference>
<dbReference type="GO" id="GO:0005886">
    <property type="term" value="C:plasma membrane"/>
    <property type="evidence" value="ECO:0007669"/>
    <property type="project" value="UniProtKB-SubCell"/>
</dbReference>
<dbReference type="GO" id="GO:0004609">
    <property type="term" value="F:phosphatidylserine decarboxylase activity"/>
    <property type="evidence" value="ECO:0007669"/>
    <property type="project" value="UniProtKB-UniRule"/>
</dbReference>
<dbReference type="GO" id="GO:0006646">
    <property type="term" value="P:phosphatidylethanolamine biosynthetic process"/>
    <property type="evidence" value="ECO:0007669"/>
    <property type="project" value="UniProtKB-UniRule"/>
</dbReference>
<dbReference type="HAMAP" id="MF_00664">
    <property type="entry name" value="PS_decarb_PSD_A"/>
    <property type="match status" value="1"/>
</dbReference>
<dbReference type="InterPro" id="IPR003817">
    <property type="entry name" value="PS_Dcarbxylase"/>
</dbReference>
<dbReference type="InterPro" id="IPR033175">
    <property type="entry name" value="PSD-A"/>
</dbReference>
<dbReference type="NCBIfam" id="TIGR00164">
    <property type="entry name" value="AS_decarb"/>
    <property type="match status" value="1"/>
</dbReference>
<dbReference type="NCBIfam" id="NF003678">
    <property type="entry name" value="PRK05305.1-2"/>
    <property type="match status" value="1"/>
</dbReference>
<dbReference type="NCBIfam" id="NF003680">
    <property type="entry name" value="PRK05305.1-5"/>
    <property type="match status" value="1"/>
</dbReference>
<dbReference type="PANTHER" id="PTHR35809">
    <property type="entry name" value="ARCHAETIDYLSERINE DECARBOXYLASE PROENZYME-RELATED"/>
    <property type="match status" value="1"/>
</dbReference>
<dbReference type="PANTHER" id="PTHR35809:SF1">
    <property type="entry name" value="ARCHAETIDYLSERINE DECARBOXYLASE PROENZYME-RELATED"/>
    <property type="match status" value="1"/>
</dbReference>
<dbReference type="Pfam" id="PF02666">
    <property type="entry name" value="PS_Dcarbxylase"/>
    <property type="match status" value="1"/>
</dbReference>
<organism>
    <name type="scientific">Neisseria meningitidis serogroup A / serotype 4A (strain DSM 15465 / Z2491)</name>
    <dbReference type="NCBI Taxonomy" id="122587"/>
    <lineage>
        <taxon>Bacteria</taxon>
        <taxon>Pseudomonadati</taxon>
        <taxon>Pseudomonadota</taxon>
        <taxon>Betaproteobacteria</taxon>
        <taxon>Neisseriales</taxon>
        <taxon>Neisseriaceae</taxon>
        <taxon>Neisseria</taxon>
    </lineage>
</organism>
<name>PSD_NEIMA</name>
<feature type="chain" id="PRO_0000029785" description="Phosphatidylserine decarboxylase beta chain" evidence="1">
    <location>
        <begin position="1"/>
        <end position="182"/>
    </location>
</feature>
<feature type="chain" id="PRO_0000029786" description="Phosphatidylserine decarboxylase alpha chain" evidence="1">
    <location>
        <begin position="183"/>
        <end position="265"/>
    </location>
</feature>
<feature type="region of interest" description="Disordered" evidence="2">
    <location>
        <begin position="218"/>
        <end position="242"/>
    </location>
</feature>
<feature type="active site" description="Schiff-base intermediate with substrate; via pyruvic acid" evidence="1">
    <location>
        <position position="183"/>
    </location>
</feature>
<feature type="site" description="Cleavage (non-hydrolytic); by autocatalysis" evidence="1">
    <location>
        <begin position="182"/>
        <end position="183"/>
    </location>
</feature>
<feature type="modified residue" description="Pyruvic acid (Ser); by autocatalysis" evidence="1">
    <location>
        <position position="183"/>
    </location>
</feature>